<protein>
    <recommendedName>
        <fullName>ATP synthase subunit b-delta</fullName>
    </recommendedName>
    <domain>
        <recommendedName>
            <fullName>ATP synthase subunit b</fullName>
        </recommendedName>
        <alternativeName>
            <fullName>ATP synthase F(0) sector subunit b 2</fullName>
        </alternativeName>
        <alternativeName>
            <fullName>ATPase subunit I 2</fullName>
        </alternativeName>
        <alternativeName>
            <fullName>F-type ATPase subunit b 2</fullName>
            <shortName>F-ATPase subunit b 2</shortName>
        </alternativeName>
    </domain>
    <domain>
        <recommendedName>
            <fullName>ATP synthase subunit delta</fullName>
        </recommendedName>
        <alternativeName>
            <fullName>ATP synthase F(1) sector subunit delta</fullName>
        </alternativeName>
        <alternativeName>
            <fullName>F-type ATPase subunit delta</fullName>
            <shortName>F-ATPase subunit delta</shortName>
        </alternativeName>
    </domain>
</protein>
<name>ATPFD_MYCTU</name>
<sequence length="446" mass="48806">MSTFIGQLFGFAVIVYLVWRFIVPLVGRLMSARQDTVRQQLADAAAAADRLAEASQAHTKALEDAKSEAHRVVEEARTDAERIAEQLEAQADVEAERIKMQGARQVDLIRAQLTRQLRLELGHESVRQARELVRNHVADQAQQSATVDRFLDQLDAMAPATADVDYPLLAKMRSASRRALTSLVDWFGTMAQDLDHQGLTTLAGELVSVARLLDREAVVTRYLTVPAEDATPRIRLIERLVSGKVGAPTLEVLRTAVSKRWSANSDLIDAIEHVSRQALLELAERAGQVDEVEDQLFRFSRILDVQPRLAILLGDCAVPAEGRVRLLRKVLERADSTVNPVVVALLSHTVELLRGQAVEEAVLFLAEVAVARRGEIVAQVGAAAELSDAQRTRLTEVLSRIYGHPVTVQLHIDAALLGGLSIAVGDEVIDGTLSSRLAAAEARLPD</sequence>
<keyword id="KW-0002">3D-structure</keyword>
<keyword id="KW-0066">ATP synthesis</keyword>
<keyword id="KW-1003">Cell membrane</keyword>
<keyword id="KW-0138">CF(0)</keyword>
<keyword id="KW-0139">CF(1)</keyword>
<keyword id="KW-0375">Hydrogen ion transport</keyword>
<keyword id="KW-0406">Ion transport</keyword>
<keyword id="KW-0472">Membrane</keyword>
<keyword id="KW-0511">Multifunctional enzyme</keyword>
<keyword id="KW-1185">Reference proteome</keyword>
<keyword id="KW-0812">Transmembrane</keyword>
<keyword id="KW-1133">Transmembrane helix</keyword>
<keyword id="KW-0813">Transport</keyword>
<reference key="1">
    <citation type="journal article" date="1998" name="Nature">
        <title>Deciphering the biology of Mycobacterium tuberculosis from the complete genome sequence.</title>
        <authorList>
            <person name="Cole S.T."/>
            <person name="Brosch R."/>
            <person name="Parkhill J."/>
            <person name="Garnier T."/>
            <person name="Churcher C.M."/>
            <person name="Harris D.E."/>
            <person name="Gordon S.V."/>
            <person name="Eiglmeier K."/>
            <person name="Gas S."/>
            <person name="Barry C.E. III"/>
            <person name="Tekaia F."/>
            <person name="Badcock K."/>
            <person name="Basham D."/>
            <person name="Brown D."/>
            <person name="Chillingworth T."/>
            <person name="Connor R."/>
            <person name="Davies R.M."/>
            <person name="Devlin K."/>
            <person name="Feltwell T."/>
            <person name="Gentles S."/>
            <person name="Hamlin N."/>
            <person name="Holroyd S."/>
            <person name="Hornsby T."/>
            <person name="Jagels K."/>
            <person name="Krogh A."/>
            <person name="McLean J."/>
            <person name="Moule S."/>
            <person name="Murphy L.D."/>
            <person name="Oliver S."/>
            <person name="Osborne J."/>
            <person name="Quail M.A."/>
            <person name="Rajandream M.A."/>
            <person name="Rogers J."/>
            <person name="Rutter S."/>
            <person name="Seeger K."/>
            <person name="Skelton S."/>
            <person name="Squares S."/>
            <person name="Squares R."/>
            <person name="Sulston J.E."/>
            <person name="Taylor K."/>
            <person name="Whitehead S."/>
            <person name="Barrell B.G."/>
        </authorList>
    </citation>
    <scope>NUCLEOTIDE SEQUENCE [LARGE SCALE GENOMIC DNA]</scope>
    <source>
        <strain>ATCC 25618 / H37Rv</strain>
    </source>
</reference>
<reference key="2">
    <citation type="journal article" date="2008" name="BMC Syst. Biol.">
        <title>targetTB: a target identification pipeline for Mycobacterium tuberculosis through an interactome, reactome and genome-scale structural analysis.</title>
        <authorList>
            <person name="Raman K."/>
            <person name="Yeturu K."/>
            <person name="Chandra N."/>
        </authorList>
    </citation>
    <scope>IDENTIFICATION AS A DRUG TARGET [LARGE SCALE ANALYSIS]</scope>
</reference>
<reference key="3">
    <citation type="journal article" date="2011" name="Mol. Cell. Proteomics">
        <title>Proteogenomic analysis of Mycobacterium tuberculosis by high resolution mass spectrometry.</title>
        <authorList>
            <person name="Kelkar D.S."/>
            <person name="Kumar D."/>
            <person name="Kumar P."/>
            <person name="Balakrishnan L."/>
            <person name="Muthusamy B."/>
            <person name="Yadav A.K."/>
            <person name="Shrivastava P."/>
            <person name="Marimuthu A."/>
            <person name="Anand S."/>
            <person name="Sundaram H."/>
            <person name="Kingsbury R."/>
            <person name="Harsha H.C."/>
            <person name="Nair B."/>
            <person name="Prasad T.S."/>
            <person name="Chauhan D.S."/>
            <person name="Katoch K."/>
            <person name="Katoch V.M."/>
            <person name="Kumar P."/>
            <person name="Chaerkady R."/>
            <person name="Ramachandran S."/>
            <person name="Dash D."/>
            <person name="Pandey A."/>
        </authorList>
    </citation>
    <scope>IDENTIFICATION BY MASS SPECTROMETRY [LARGE SCALE ANALYSIS]</scope>
    <source>
        <strain>ATCC 25618 / H37Rv</strain>
    </source>
</reference>
<evidence type="ECO:0000250" key="1"/>
<evidence type="ECO:0000255" key="2"/>
<evidence type="ECO:0000305" key="3"/>
<gene>
    <name type="primary">atpFH</name>
    <name type="synonym">atpF</name>
    <name type="synonym">atpH</name>
    <name type="ordered locus">Rv1307</name>
    <name type="ORF">MTCY373.27</name>
</gene>
<proteinExistence type="evidence at protein level"/>
<organism>
    <name type="scientific">Mycobacterium tuberculosis (strain ATCC 25618 / H37Rv)</name>
    <dbReference type="NCBI Taxonomy" id="83332"/>
    <lineage>
        <taxon>Bacteria</taxon>
        <taxon>Bacillati</taxon>
        <taxon>Actinomycetota</taxon>
        <taxon>Actinomycetes</taxon>
        <taxon>Mycobacteriales</taxon>
        <taxon>Mycobacteriaceae</taxon>
        <taxon>Mycobacterium</taxon>
        <taxon>Mycobacterium tuberculosis complex</taxon>
    </lineage>
</organism>
<comment type="function">
    <text evidence="1">F(1)F(0) ATP synthase produces ATP from ADP in the presence of a proton or sodium gradient. F-type ATPases consist of two structural domains, F(1) containing the extramembraneous catalytic core and F(0) containing the membrane proton channel, linked together by a central stalk and a peripheral stalk. During catalysis, ATP synthesis in the catalytic domain of F(1) is coupled via a rotary mechanism of the central stalk subunits to proton translocation (By similarity).</text>
</comment>
<comment type="function">
    <text evidence="1">This fusion protein includes a component of the F(0) channel (subunit b) and of the F(1) subunit (subunit delta). Two copies of subunit b and one of delta together form the peripheral 'stator' stalk which links F(1) to F(0) (By similarity).</text>
</comment>
<comment type="subunit">
    <text evidence="1">F-type ATPases have 2 components, F(1) - the catalytic core - and F(0) - the membrane proton channel. F(1) has five subunits: alpha(3), beta(3), gamma(1), delta(1), epsilon(1). F(0) has three main subunits: a(1), b(2) and c(10-14). The alpha and beta chains form an alternating ring which encloses part of the gamma chain. F(1) is attached to F(0) by a central stalk formed by the gamma and epsilon chains, while a peripheral stalk is formed by the delta and b chains (By similarity).</text>
</comment>
<comment type="subcellular location">
    <subcellularLocation>
        <location evidence="1">Cell membrane</location>
        <topology evidence="1">Single-pass membrane protein</topology>
    </subcellularLocation>
</comment>
<comment type="miscellaneous">
    <text>Was identified as a high-confidence drug target.</text>
</comment>
<comment type="similarity">
    <text evidence="3">In the N-terminal section; belongs to the ATPase B chain family.</text>
</comment>
<comment type="similarity">
    <text evidence="3">In the C-terminal section; belongs to the ATPase delta chain family.</text>
</comment>
<dbReference type="EMBL" id="AL123456">
    <property type="protein sequence ID" value="CCP44064.1"/>
    <property type="molecule type" value="Genomic_DNA"/>
</dbReference>
<dbReference type="PIR" id="G70774">
    <property type="entry name" value="G70774"/>
</dbReference>
<dbReference type="RefSeq" id="NP_215823.1">
    <property type="nucleotide sequence ID" value="NC_000962.3"/>
</dbReference>
<dbReference type="RefSeq" id="WP_003406697.1">
    <property type="nucleotide sequence ID" value="NZ_NVQJ01000030.1"/>
</dbReference>
<dbReference type="PDB" id="8J0S">
    <property type="method" value="EM"/>
    <property type="resolution" value="2.58 A"/>
    <property type="chains" value="d=1-446"/>
</dbReference>
<dbReference type="PDB" id="8J0T">
    <property type="method" value="EM"/>
    <property type="resolution" value="2.80 A"/>
    <property type="chains" value="d=1-446"/>
</dbReference>
<dbReference type="PDB" id="8JR0">
    <property type="method" value="EM"/>
    <property type="resolution" value="2.80 A"/>
    <property type="chains" value="d=1-446"/>
</dbReference>
<dbReference type="PDBsum" id="8J0S"/>
<dbReference type="PDBsum" id="8J0T"/>
<dbReference type="PDBsum" id="8JR0"/>
<dbReference type="SMR" id="P9WPV3"/>
<dbReference type="FunCoup" id="P9WPV3">
    <property type="interactions" value="47"/>
</dbReference>
<dbReference type="STRING" id="83332.Rv1307"/>
<dbReference type="BindingDB" id="P9WPV3"/>
<dbReference type="ChEMBL" id="CHEMBL2364166"/>
<dbReference type="DrugCentral" id="P9WPV3"/>
<dbReference type="PaxDb" id="83332-Rv1307"/>
<dbReference type="DNASU" id="886934"/>
<dbReference type="GeneID" id="886934"/>
<dbReference type="KEGG" id="mtu:Rv1307"/>
<dbReference type="KEGG" id="mtv:RVBD_1307"/>
<dbReference type="TubercuList" id="Rv1307"/>
<dbReference type="eggNOG" id="COG0711">
    <property type="taxonomic scope" value="Bacteria"/>
</dbReference>
<dbReference type="eggNOG" id="COG0712">
    <property type="taxonomic scope" value="Bacteria"/>
</dbReference>
<dbReference type="InParanoid" id="P9WPV3"/>
<dbReference type="OrthoDB" id="5242917at2"/>
<dbReference type="PhylomeDB" id="P9WPV3"/>
<dbReference type="PRO" id="PR:P9WPV3"/>
<dbReference type="Proteomes" id="UP000001584">
    <property type="component" value="Chromosome"/>
</dbReference>
<dbReference type="GO" id="GO:0009274">
    <property type="term" value="C:peptidoglycan-based cell wall"/>
    <property type="evidence" value="ECO:0007005"/>
    <property type="project" value="MTBBASE"/>
</dbReference>
<dbReference type="GO" id="GO:0005886">
    <property type="term" value="C:plasma membrane"/>
    <property type="evidence" value="ECO:0007005"/>
    <property type="project" value="MTBBASE"/>
</dbReference>
<dbReference type="GO" id="GO:0045259">
    <property type="term" value="C:proton-transporting ATP synthase complex"/>
    <property type="evidence" value="ECO:0007669"/>
    <property type="project" value="UniProtKB-KW"/>
</dbReference>
<dbReference type="GO" id="GO:0046933">
    <property type="term" value="F:proton-transporting ATP synthase activity, rotational mechanism"/>
    <property type="evidence" value="ECO:0007669"/>
    <property type="project" value="UniProtKB-UniRule"/>
</dbReference>
<dbReference type="GO" id="GO:0015986">
    <property type="term" value="P:proton motive force-driven ATP synthesis"/>
    <property type="evidence" value="ECO:0000318"/>
    <property type="project" value="GO_Central"/>
</dbReference>
<dbReference type="CDD" id="cd06503">
    <property type="entry name" value="ATP-synt_Fo_b"/>
    <property type="match status" value="1"/>
</dbReference>
<dbReference type="Gene3D" id="1.20.5.620">
    <property type="entry name" value="F1F0 ATP synthase subunit B, membrane domain"/>
    <property type="match status" value="1"/>
</dbReference>
<dbReference type="Gene3D" id="1.10.520.20">
    <property type="entry name" value="N-terminal domain of the delta subunit of the F1F0-ATP synthase"/>
    <property type="match status" value="1"/>
</dbReference>
<dbReference type="HAMAP" id="MF_01398">
    <property type="entry name" value="ATP_synth_b_bprime"/>
    <property type="match status" value="1"/>
</dbReference>
<dbReference type="HAMAP" id="MF_01416">
    <property type="entry name" value="ATP_synth_delta_bact"/>
    <property type="match status" value="1"/>
</dbReference>
<dbReference type="InterPro" id="IPR028987">
    <property type="entry name" value="ATP_synth_B-like_membr_sf"/>
</dbReference>
<dbReference type="InterPro" id="IPR002146">
    <property type="entry name" value="ATP_synth_b/b'su_bac/chlpt"/>
</dbReference>
<dbReference type="InterPro" id="IPR005864">
    <property type="entry name" value="ATP_synth_F0_bsu_bac"/>
</dbReference>
<dbReference type="InterPro" id="IPR026015">
    <property type="entry name" value="ATP_synth_OSCP/delta_N_sf"/>
</dbReference>
<dbReference type="InterPro" id="IPR000711">
    <property type="entry name" value="ATPase_OSCP/dsu"/>
</dbReference>
<dbReference type="NCBIfam" id="TIGR01144">
    <property type="entry name" value="ATP_synt_b"/>
    <property type="match status" value="1"/>
</dbReference>
<dbReference type="NCBIfam" id="TIGR01145">
    <property type="entry name" value="ATP_synt_delta"/>
    <property type="match status" value="1"/>
</dbReference>
<dbReference type="NCBIfam" id="NF009961">
    <property type="entry name" value="PRK13428.1"/>
    <property type="match status" value="1"/>
</dbReference>
<dbReference type="NCBIfam" id="NF009967">
    <property type="entry name" value="PRK13430.1"/>
    <property type="match status" value="1"/>
</dbReference>
<dbReference type="PANTHER" id="PTHR11910">
    <property type="entry name" value="ATP SYNTHASE DELTA CHAIN"/>
    <property type="match status" value="1"/>
</dbReference>
<dbReference type="Pfam" id="PF00430">
    <property type="entry name" value="ATP-synt_B"/>
    <property type="match status" value="1"/>
</dbReference>
<dbReference type="Pfam" id="PF00213">
    <property type="entry name" value="OSCP"/>
    <property type="match status" value="1"/>
</dbReference>
<dbReference type="PRINTS" id="PR00125">
    <property type="entry name" value="ATPASEDELTA"/>
</dbReference>
<dbReference type="SUPFAM" id="SSF81573">
    <property type="entry name" value="F1F0 ATP synthase subunit B, membrane domain"/>
    <property type="match status" value="1"/>
</dbReference>
<feature type="chain" id="PRO_0000193473" description="ATP synthase subunit b-delta">
    <location>
        <begin position="1"/>
        <end position="446"/>
    </location>
</feature>
<feature type="transmembrane region" description="Helical" evidence="2">
    <location>
        <begin position="4"/>
        <end position="24"/>
    </location>
</feature>
<feature type="region of interest" description="ATP synthase subunit b">
    <location>
        <begin position="1"/>
        <end position="168"/>
    </location>
</feature>
<feature type="region of interest" description="ATP synthase subunit delta">
    <location>
        <begin position="169"/>
        <end position="446"/>
    </location>
</feature>
<accession>P9WPV3</accession>
<accession>L0T902</accession>
<accession>P0A500</accession>
<accession>Q10594</accession>